<sequence>MVTIEDKINLFSKIIYGEVDDKINSELDELENVEKDTIEKEEREVKKYRNKNMQSVEKKIKSKFEKEVFKLKLEEQQQLLNLKENMINETLESLKERIIDFTKSDEYINYIKSHLDNTLKDIENKEGIIIYFNKKDLEKFKKVINKDNVEVSNESKDIIGGYIIQDKNNKFRVDCSLEISIEECKEKIGISITELFM</sequence>
<feature type="chain" id="PRO_0000322520" description="V-type ATP synthase subunit E 2">
    <location>
        <begin position="1"/>
        <end position="197"/>
    </location>
</feature>
<proteinExistence type="inferred from homology"/>
<gene>
    <name evidence="1" type="primary">atpE2</name>
    <name type="ordered locus">CTC_02329</name>
</gene>
<evidence type="ECO:0000255" key="1">
    <source>
        <dbReference type="HAMAP-Rule" id="MF_00311"/>
    </source>
</evidence>
<name>VATE2_CLOTE</name>
<protein>
    <recommendedName>
        <fullName>V-type ATP synthase subunit E 2</fullName>
    </recommendedName>
    <alternativeName>
        <fullName evidence="1">V-ATPase subunit E 2</fullName>
    </alternativeName>
</protein>
<organism>
    <name type="scientific">Clostridium tetani (strain Massachusetts / E88)</name>
    <dbReference type="NCBI Taxonomy" id="212717"/>
    <lineage>
        <taxon>Bacteria</taxon>
        <taxon>Bacillati</taxon>
        <taxon>Bacillota</taxon>
        <taxon>Clostridia</taxon>
        <taxon>Eubacteriales</taxon>
        <taxon>Clostridiaceae</taxon>
        <taxon>Clostridium</taxon>
    </lineage>
</organism>
<accession>Q891P0</accession>
<keyword id="KW-0066">ATP synthesis</keyword>
<keyword id="KW-0375">Hydrogen ion transport</keyword>
<keyword id="KW-0406">Ion transport</keyword>
<keyword id="KW-1185">Reference proteome</keyword>
<keyword id="KW-0813">Transport</keyword>
<reference key="1">
    <citation type="journal article" date="2003" name="Proc. Natl. Acad. Sci. U.S.A.">
        <title>The genome sequence of Clostridium tetani, the causative agent of tetanus disease.</title>
        <authorList>
            <person name="Brueggemann H."/>
            <person name="Baeumer S."/>
            <person name="Fricke W.F."/>
            <person name="Wiezer A."/>
            <person name="Liesegang H."/>
            <person name="Decker I."/>
            <person name="Herzberg C."/>
            <person name="Martinez-Arias R."/>
            <person name="Merkl R."/>
            <person name="Henne A."/>
            <person name="Gottschalk G."/>
        </authorList>
    </citation>
    <scope>NUCLEOTIDE SEQUENCE [LARGE SCALE GENOMIC DNA]</scope>
    <source>
        <strain>Massachusetts / E88</strain>
    </source>
</reference>
<comment type="function">
    <text evidence="1">Produces ATP from ADP in the presence of a proton gradient across the membrane.</text>
</comment>
<comment type="similarity">
    <text evidence="1">Belongs to the V-ATPase E subunit family.</text>
</comment>
<dbReference type="EMBL" id="AE015927">
    <property type="protein sequence ID" value="AAO36805.1"/>
    <property type="molecule type" value="Genomic_DNA"/>
</dbReference>
<dbReference type="RefSeq" id="WP_011100466.1">
    <property type="nucleotide sequence ID" value="NC_004557.1"/>
</dbReference>
<dbReference type="SMR" id="Q891P0"/>
<dbReference type="STRING" id="212717.CTC_02329"/>
<dbReference type="GeneID" id="24254173"/>
<dbReference type="KEGG" id="ctc:CTC_02329"/>
<dbReference type="HOGENOM" id="CLU_1382055_0_0_9"/>
<dbReference type="OrthoDB" id="1725377at2"/>
<dbReference type="Proteomes" id="UP000001412">
    <property type="component" value="Chromosome"/>
</dbReference>
<dbReference type="GO" id="GO:0033178">
    <property type="term" value="C:proton-transporting two-sector ATPase complex, catalytic domain"/>
    <property type="evidence" value="ECO:0007669"/>
    <property type="project" value="InterPro"/>
</dbReference>
<dbReference type="GO" id="GO:0005524">
    <property type="term" value="F:ATP binding"/>
    <property type="evidence" value="ECO:0007669"/>
    <property type="project" value="UniProtKB-UniRule"/>
</dbReference>
<dbReference type="GO" id="GO:0046933">
    <property type="term" value="F:proton-transporting ATP synthase activity, rotational mechanism"/>
    <property type="evidence" value="ECO:0007669"/>
    <property type="project" value="UniProtKB-UniRule"/>
</dbReference>
<dbReference type="GO" id="GO:0046961">
    <property type="term" value="F:proton-transporting ATPase activity, rotational mechanism"/>
    <property type="evidence" value="ECO:0007669"/>
    <property type="project" value="InterPro"/>
</dbReference>
<dbReference type="GO" id="GO:0042777">
    <property type="term" value="P:proton motive force-driven plasma membrane ATP synthesis"/>
    <property type="evidence" value="ECO:0007669"/>
    <property type="project" value="UniProtKB-UniRule"/>
</dbReference>
<dbReference type="Gene3D" id="3.30.2320.30">
    <property type="entry name" value="ATP synthase, E subunit, C-terminal"/>
    <property type="match status" value="1"/>
</dbReference>
<dbReference type="HAMAP" id="MF_00311">
    <property type="entry name" value="ATP_synth_E_arch"/>
    <property type="match status" value="1"/>
</dbReference>
<dbReference type="InterPro" id="IPR038495">
    <property type="entry name" value="ATPase_E_C"/>
</dbReference>
<dbReference type="InterPro" id="IPR002842">
    <property type="entry name" value="ATPase_V1_Esu"/>
</dbReference>
<dbReference type="Pfam" id="PF01991">
    <property type="entry name" value="vATP-synt_E"/>
    <property type="match status" value="1"/>
</dbReference>
<dbReference type="SUPFAM" id="SSF160527">
    <property type="entry name" value="V-type ATPase subunit E-like"/>
    <property type="match status" value="1"/>
</dbReference>